<feature type="chain" id="PRO_1000012247" description="Lipoyl synthase">
    <location>
        <begin position="1"/>
        <end position="319"/>
    </location>
</feature>
<feature type="domain" description="Radical SAM core" evidence="2">
    <location>
        <begin position="73"/>
        <end position="289"/>
    </location>
</feature>
<feature type="region of interest" description="Disordered" evidence="3">
    <location>
        <begin position="5"/>
        <end position="31"/>
    </location>
</feature>
<feature type="binding site" evidence="1">
    <location>
        <position position="61"/>
    </location>
    <ligand>
        <name>[4Fe-4S] cluster</name>
        <dbReference type="ChEBI" id="CHEBI:49883"/>
        <label>1</label>
    </ligand>
</feature>
<feature type="binding site" evidence="1">
    <location>
        <position position="66"/>
    </location>
    <ligand>
        <name>[4Fe-4S] cluster</name>
        <dbReference type="ChEBI" id="CHEBI:49883"/>
        <label>1</label>
    </ligand>
</feature>
<feature type="binding site" evidence="1">
    <location>
        <position position="72"/>
    </location>
    <ligand>
        <name>[4Fe-4S] cluster</name>
        <dbReference type="ChEBI" id="CHEBI:49883"/>
        <label>1</label>
    </ligand>
</feature>
<feature type="binding site" evidence="1">
    <location>
        <position position="87"/>
    </location>
    <ligand>
        <name>[4Fe-4S] cluster</name>
        <dbReference type="ChEBI" id="CHEBI:49883"/>
        <label>2</label>
        <note>4Fe-4S-S-AdoMet</note>
    </ligand>
</feature>
<feature type="binding site" evidence="1">
    <location>
        <position position="91"/>
    </location>
    <ligand>
        <name>[4Fe-4S] cluster</name>
        <dbReference type="ChEBI" id="CHEBI:49883"/>
        <label>2</label>
        <note>4Fe-4S-S-AdoMet</note>
    </ligand>
</feature>
<feature type="binding site" evidence="1">
    <location>
        <position position="94"/>
    </location>
    <ligand>
        <name>[4Fe-4S] cluster</name>
        <dbReference type="ChEBI" id="CHEBI:49883"/>
        <label>2</label>
        <note>4Fe-4S-S-AdoMet</note>
    </ligand>
</feature>
<feature type="binding site" evidence="1">
    <location>
        <position position="300"/>
    </location>
    <ligand>
        <name>[4Fe-4S] cluster</name>
        <dbReference type="ChEBI" id="CHEBI:49883"/>
        <label>1</label>
    </ligand>
</feature>
<evidence type="ECO:0000255" key="1">
    <source>
        <dbReference type="HAMAP-Rule" id="MF_00206"/>
    </source>
</evidence>
<evidence type="ECO:0000255" key="2">
    <source>
        <dbReference type="PROSITE-ProRule" id="PRU01266"/>
    </source>
</evidence>
<evidence type="ECO:0000256" key="3">
    <source>
        <dbReference type="SAM" id="MobiDB-lite"/>
    </source>
</evidence>
<name>LIPA_NITWN</name>
<organism>
    <name type="scientific">Nitrobacter winogradskyi (strain ATCC 25391 / DSM 10237 / CIP 104748 / NCIMB 11846 / Nb-255)</name>
    <dbReference type="NCBI Taxonomy" id="323098"/>
    <lineage>
        <taxon>Bacteria</taxon>
        <taxon>Pseudomonadati</taxon>
        <taxon>Pseudomonadota</taxon>
        <taxon>Alphaproteobacteria</taxon>
        <taxon>Hyphomicrobiales</taxon>
        <taxon>Nitrobacteraceae</taxon>
        <taxon>Nitrobacter</taxon>
    </lineage>
</organism>
<reference key="1">
    <citation type="journal article" date="2006" name="Appl. Environ. Microbiol.">
        <title>Genome sequence of the chemolithoautotrophic nitrite-oxidizing bacterium Nitrobacter winogradskyi Nb-255.</title>
        <authorList>
            <person name="Starkenburg S.R."/>
            <person name="Chain P.S.G."/>
            <person name="Sayavedra-Soto L.A."/>
            <person name="Hauser L."/>
            <person name="Land M.L."/>
            <person name="Larimer F.W."/>
            <person name="Malfatti S.A."/>
            <person name="Klotz M.G."/>
            <person name="Bottomley P.J."/>
            <person name="Arp D.J."/>
            <person name="Hickey W.J."/>
        </authorList>
    </citation>
    <scope>NUCLEOTIDE SEQUENCE [LARGE SCALE GENOMIC DNA]</scope>
    <source>
        <strain>ATCC 25391 / DSM 10237 / CIP 104748 / NCIMB 11846 / Nb-255</strain>
    </source>
</reference>
<accession>Q3SSP1</accession>
<comment type="function">
    <text evidence="1">Catalyzes the radical-mediated insertion of two sulfur atoms into the C-6 and C-8 positions of the octanoyl moiety bound to the lipoyl domains of lipoate-dependent enzymes, thereby converting the octanoylated domains into lipoylated derivatives.</text>
</comment>
<comment type="catalytic activity">
    <reaction evidence="1">
        <text>[[Fe-S] cluster scaffold protein carrying a second [4Fe-4S](2+) cluster] + N(6)-octanoyl-L-lysyl-[protein] + 2 oxidized [2Fe-2S]-[ferredoxin] + 2 S-adenosyl-L-methionine + 4 H(+) = [[Fe-S] cluster scaffold protein] + N(6)-[(R)-dihydrolipoyl]-L-lysyl-[protein] + 4 Fe(3+) + 2 hydrogen sulfide + 2 5'-deoxyadenosine + 2 L-methionine + 2 reduced [2Fe-2S]-[ferredoxin]</text>
        <dbReference type="Rhea" id="RHEA:16585"/>
        <dbReference type="Rhea" id="RHEA-COMP:9928"/>
        <dbReference type="Rhea" id="RHEA-COMP:10000"/>
        <dbReference type="Rhea" id="RHEA-COMP:10001"/>
        <dbReference type="Rhea" id="RHEA-COMP:10475"/>
        <dbReference type="Rhea" id="RHEA-COMP:14568"/>
        <dbReference type="Rhea" id="RHEA-COMP:14569"/>
        <dbReference type="ChEBI" id="CHEBI:15378"/>
        <dbReference type="ChEBI" id="CHEBI:17319"/>
        <dbReference type="ChEBI" id="CHEBI:29034"/>
        <dbReference type="ChEBI" id="CHEBI:29919"/>
        <dbReference type="ChEBI" id="CHEBI:33722"/>
        <dbReference type="ChEBI" id="CHEBI:33737"/>
        <dbReference type="ChEBI" id="CHEBI:33738"/>
        <dbReference type="ChEBI" id="CHEBI:57844"/>
        <dbReference type="ChEBI" id="CHEBI:59789"/>
        <dbReference type="ChEBI" id="CHEBI:78809"/>
        <dbReference type="ChEBI" id="CHEBI:83100"/>
        <dbReference type="EC" id="2.8.1.8"/>
    </reaction>
</comment>
<comment type="cofactor">
    <cofactor evidence="1">
        <name>[4Fe-4S] cluster</name>
        <dbReference type="ChEBI" id="CHEBI:49883"/>
    </cofactor>
    <text evidence="1">Binds 2 [4Fe-4S] clusters per subunit. One cluster is coordinated with 3 cysteines and an exchangeable S-adenosyl-L-methionine.</text>
</comment>
<comment type="pathway">
    <text evidence="1">Protein modification; protein lipoylation via endogenous pathway; protein N(6)-(lipoyl)lysine from octanoyl-[acyl-carrier-protein]: step 2/2.</text>
</comment>
<comment type="subcellular location">
    <subcellularLocation>
        <location evidence="1">Cytoplasm</location>
    </subcellularLocation>
</comment>
<comment type="similarity">
    <text evidence="1">Belongs to the radical SAM superfamily. Lipoyl synthase family.</text>
</comment>
<keyword id="KW-0004">4Fe-4S</keyword>
<keyword id="KW-0963">Cytoplasm</keyword>
<keyword id="KW-0408">Iron</keyword>
<keyword id="KW-0411">Iron-sulfur</keyword>
<keyword id="KW-0479">Metal-binding</keyword>
<keyword id="KW-1185">Reference proteome</keyword>
<keyword id="KW-0949">S-adenosyl-L-methionine</keyword>
<keyword id="KW-0808">Transferase</keyword>
<protein>
    <recommendedName>
        <fullName evidence="1">Lipoyl synthase</fullName>
        <ecNumber evidence="1">2.8.1.8</ecNumber>
    </recommendedName>
    <alternativeName>
        <fullName evidence="1">Lip-syn</fullName>
        <shortName evidence="1">LS</shortName>
    </alternativeName>
    <alternativeName>
        <fullName evidence="1">Lipoate synthase</fullName>
    </alternativeName>
    <alternativeName>
        <fullName evidence="1">Lipoic acid synthase</fullName>
    </alternativeName>
    <alternativeName>
        <fullName evidence="1">Sulfur insertion protein LipA</fullName>
    </alternativeName>
</protein>
<sequence length="319" mass="35509">MVVILDTISANPVRPRHPEKANRPDALSPPKPDWIRVRAPNTRGYANTRRIVKENGLVTVCEEAGCPNIGECWDKKHATFMIMGDTCTRACAFCNVKTGMPGAIESSEPEYVAEATRKLGLAHVVVTSVDRDDLDDGGAEHFAQTIRAIRERCPATTIEILTPDFLRKDGALEKVVAAKPDVFNHNLETVPSRYLTVRPGARYFHSIRLLQRVKEIDPAIFTKSGIMVGLGEERHEVLQVMDDLRSADVDFLTIGQYLQPTRKHHAVIRYVTPEEFSSYETVAYTKGFLMVSASPLTRSSHHAGEDFAKLQAARATLSR</sequence>
<proteinExistence type="inferred from homology"/>
<dbReference type="EC" id="2.8.1.8" evidence="1"/>
<dbReference type="EMBL" id="CP000115">
    <property type="protein sequence ID" value="ABA04700.1"/>
    <property type="molecule type" value="Genomic_DNA"/>
</dbReference>
<dbReference type="RefSeq" id="WP_011314708.1">
    <property type="nucleotide sequence ID" value="NC_007406.1"/>
</dbReference>
<dbReference type="SMR" id="Q3SSP1"/>
<dbReference type="STRING" id="323098.Nwi_1439"/>
<dbReference type="KEGG" id="nwi:Nwi_1439"/>
<dbReference type="eggNOG" id="COG0320">
    <property type="taxonomic scope" value="Bacteria"/>
</dbReference>
<dbReference type="HOGENOM" id="CLU_033144_2_1_5"/>
<dbReference type="OrthoDB" id="9787898at2"/>
<dbReference type="UniPathway" id="UPA00538">
    <property type="reaction ID" value="UER00593"/>
</dbReference>
<dbReference type="Proteomes" id="UP000002531">
    <property type="component" value="Chromosome"/>
</dbReference>
<dbReference type="GO" id="GO:0005737">
    <property type="term" value="C:cytoplasm"/>
    <property type="evidence" value="ECO:0007669"/>
    <property type="project" value="UniProtKB-SubCell"/>
</dbReference>
<dbReference type="GO" id="GO:0051539">
    <property type="term" value="F:4 iron, 4 sulfur cluster binding"/>
    <property type="evidence" value="ECO:0007669"/>
    <property type="project" value="UniProtKB-UniRule"/>
</dbReference>
<dbReference type="GO" id="GO:0016992">
    <property type="term" value="F:lipoate synthase activity"/>
    <property type="evidence" value="ECO:0007669"/>
    <property type="project" value="UniProtKB-UniRule"/>
</dbReference>
<dbReference type="GO" id="GO:0046872">
    <property type="term" value="F:metal ion binding"/>
    <property type="evidence" value="ECO:0007669"/>
    <property type="project" value="UniProtKB-KW"/>
</dbReference>
<dbReference type="CDD" id="cd01335">
    <property type="entry name" value="Radical_SAM"/>
    <property type="match status" value="1"/>
</dbReference>
<dbReference type="FunFam" id="3.20.20.70:FF:000186">
    <property type="entry name" value="Lipoyl synthase"/>
    <property type="match status" value="1"/>
</dbReference>
<dbReference type="Gene3D" id="3.20.20.70">
    <property type="entry name" value="Aldolase class I"/>
    <property type="match status" value="1"/>
</dbReference>
<dbReference type="HAMAP" id="MF_00206">
    <property type="entry name" value="Lipoyl_synth"/>
    <property type="match status" value="1"/>
</dbReference>
<dbReference type="InterPro" id="IPR013785">
    <property type="entry name" value="Aldolase_TIM"/>
</dbReference>
<dbReference type="InterPro" id="IPR006638">
    <property type="entry name" value="Elp3/MiaA/NifB-like_rSAM"/>
</dbReference>
<dbReference type="InterPro" id="IPR003698">
    <property type="entry name" value="Lipoyl_synth"/>
</dbReference>
<dbReference type="InterPro" id="IPR007197">
    <property type="entry name" value="rSAM"/>
</dbReference>
<dbReference type="NCBIfam" id="TIGR00510">
    <property type="entry name" value="lipA"/>
    <property type="match status" value="1"/>
</dbReference>
<dbReference type="NCBIfam" id="NF004019">
    <property type="entry name" value="PRK05481.1"/>
    <property type="match status" value="1"/>
</dbReference>
<dbReference type="NCBIfam" id="NF009544">
    <property type="entry name" value="PRK12928.1"/>
    <property type="match status" value="1"/>
</dbReference>
<dbReference type="PANTHER" id="PTHR10949">
    <property type="entry name" value="LIPOYL SYNTHASE"/>
    <property type="match status" value="1"/>
</dbReference>
<dbReference type="PANTHER" id="PTHR10949:SF0">
    <property type="entry name" value="LIPOYL SYNTHASE, MITOCHONDRIAL"/>
    <property type="match status" value="1"/>
</dbReference>
<dbReference type="Pfam" id="PF04055">
    <property type="entry name" value="Radical_SAM"/>
    <property type="match status" value="1"/>
</dbReference>
<dbReference type="PIRSF" id="PIRSF005963">
    <property type="entry name" value="Lipoyl_synth"/>
    <property type="match status" value="1"/>
</dbReference>
<dbReference type="SFLD" id="SFLDF00271">
    <property type="entry name" value="lipoyl_synthase"/>
    <property type="match status" value="1"/>
</dbReference>
<dbReference type="SFLD" id="SFLDG01058">
    <property type="entry name" value="lipoyl_synthase_like"/>
    <property type="match status" value="1"/>
</dbReference>
<dbReference type="SMART" id="SM00729">
    <property type="entry name" value="Elp3"/>
    <property type="match status" value="1"/>
</dbReference>
<dbReference type="SUPFAM" id="SSF102114">
    <property type="entry name" value="Radical SAM enzymes"/>
    <property type="match status" value="1"/>
</dbReference>
<dbReference type="PROSITE" id="PS51918">
    <property type="entry name" value="RADICAL_SAM"/>
    <property type="match status" value="1"/>
</dbReference>
<gene>
    <name evidence="1" type="primary">lipA</name>
    <name type="ordered locus">Nwi_1439</name>
</gene>